<reference key="1">
    <citation type="journal article" date="2008" name="PLoS Genet.">
        <title>Genomic islands in the pathogenic filamentous fungus Aspergillus fumigatus.</title>
        <authorList>
            <person name="Fedorova N.D."/>
            <person name="Khaldi N."/>
            <person name="Joardar V.S."/>
            <person name="Maiti R."/>
            <person name="Amedeo P."/>
            <person name="Anderson M.J."/>
            <person name="Crabtree J."/>
            <person name="Silva J.C."/>
            <person name="Badger J.H."/>
            <person name="Albarraq A."/>
            <person name="Angiuoli S."/>
            <person name="Bussey H."/>
            <person name="Bowyer P."/>
            <person name="Cotty P.J."/>
            <person name="Dyer P.S."/>
            <person name="Egan A."/>
            <person name="Galens K."/>
            <person name="Fraser-Liggett C.M."/>
            <person name="Haas B.J."/>
            <person name="Inman J.M."/>
            <person name="Kent R."/>
            <person name="Lemieux S."/>
            <person name="Malavazi I."/>
            <person name="Orvis J."/>
            <person name="Roemer T."/>
            <person name="Ronning C.M."/>
            <person name="Sundaram J.P."/>
            <person name="Sutton G."/>
            <person name="Turner G."/>
            <person name="Venter J.C."/>
            <person name="White O.R."/>
            <person name="Whitty B.R."/>
            <person name="Youngman P."/>
            <person name="Wolfe K.H."/>
            <person name="Goldman G.H."/>
            <person name="Wortman J.R."/>
            <person name="Jiang B."/>
            <person name="Denning D.W."/>
            <person name="Nierman W.C."/>
        </authorList>
    </citation>
    <scope>NUCLEOTIDE SEQUENCE [LARGE SCALE GENOMIC DNA]</scope>
    <source>
        <strain>ATCC 1007 / CBS 513.65 / DSM 816 / NCTC 3887 / NRRL 1 / QM 1276 / 107</strain>
    </source>
</reference>
<keyword id="KW-0067">ATP-binding</keyword>
<keyword id="KW-0347">Helicase</keyword>
<keyword id="KW-0378">Hydrolase</keyword>
<keyword id="KW-0507">mRNA processing</keyword>
<keyword id="KW-0508">mRNA splicing</keyword>
<keyword id="KW-0547">Nucleotide-binding</keyword>
<keyword id="KW-0539">Nucleus</keyword>
<keyword id="KW-1185">Reference proteome</keyword>
<protein>
    <recommendedName>
        <fullName>Pre-mRNA-processing ATP-dependent RNA helicase prp5</fullName>
        <ecNumber>3.6.4.13</ecNumber>
    </recommendedName>
</protein>
<feature type="chain" id="PRO_0000282690" description="Pre-mRNA-processing ATP-dependent RNA helicase prp5">
    <location>
        <begin position="1"/>
        <end position="1192"/>
    </location>
</feature>
<feature type="domain" description="Helicase ATP-binding" evidence="2">
    <location>
        <begin position="588"/>
        <end position="766"/>
    </location>
</feature>
<feature type="domain" description="Helicase C-terminal" evidence="3">
    <location>
        <begin position="793"/>
        <end position="943"/>
    </location>
</feature>
<feature type="region of interest" description="Disordered" evidence="4">
    <location>
        <begin position="1"/>
        <end position="241"/>
    </location>
</feature>
<feature type="region of interest" description="Disordered" evidence="4">
    <location>
        <begin position="315"/>
        <end position="416"/>
    </location>
</feature>
<feature type="region of interest" description="Disordered" evidence="4">
    <location>
        <begin position="957"/>
        <end position="1003"/>
    </location>
</feature>
<feature type="short sequence motif" description="Q motif">
    <location>
        <begin position="557"/>
        <end position="585"/>
    </location>
</feature>
<feature type="short sequence motif" description="DEAD box">
    <location>
        <begin position="714"/>
        <end position="717"/>
    </location>
</feature>
<feature type="compositionally biased region" description="Low complexity" evidence="4">
    <location>
        <begin position="8"/>
        <end position="20"/>
    </location>
</feature>
<feature type="compositionally biased region" description="Basic and acidic residues" evidence="4">
    <location>
        <begin position="24"/>
        <end position="89"/>
    </location>
</feature>
<feature type="compositionally biased region" description="Basic and acidic residues" evidence="4">
    <location>
        <begin position="96"/>
        <end position="155"/>
    </location>
</feature>
<feature type="compositionally biased region" description="Basic and acidic residues" evidence="4">
    <location>
        <begin position="167"/>
        <end position="195"/>
    </location>
</feature>
<feature type="compositionally biased region" description="Low complexity" evidence="4">
    <location>
        <begin position="226"/>
        <end position="238"/>
    </location>
</feature>
<feature type="compositionally biased region" description="Acidic residues" evidence="4">
    <location>
        <begin position="360"/>
        <end position="377"/>
    </location>
</feature>
<feature type="compositionally biased region" description="Basic and acidic residues" evidence="4">
    <location>
        <begin position="384"/>
        <end position="393"/>
    </location>
</feature>
<feature type="compositionally biased region" description="Polar residues" evidence="4">
    <location>
        <begin position="400"/>
        <end position="410"/>
    </location>
</feature>
<feature type="compositionally biased region" description="Basic and acidic residues" evidence="4">
    <location>
        <begin position="966"/>
        <end position="989"/>
    </location>
</feature>
<feature type="binding site" evidence="2">
    <location>
        <begin position="601"/>
        <end position="608"/>
    </location>
    <ligand>
        <name>ATP</name>
        <dbReference type="ChEBI" id="CHEBI:30616"/>
    </ligand>
</feature>
<accession>A1CQA9</accession>
<proteinExistence type="inferred from homology"/>
<organism>
    <name type="scientific">Aspergillus clavatus (strain ATCC 1007 / CBS 513.65 / DSM 816 / NCTC 3887 / NRRL 1 / QM 1276 / 107)</name>
    <dbReference type="NCBI Taxonomy" id="344612"/>
    <lineage>
        <taxon>Eukaryota</taxon>
        <taxon>Fungi</taxon>
        <taxon>Dikarya</taxon>
        <taxon>Ascomycota</taxon>
        <taxon>Pezizomycotina</taxon>
        <taxon>Eurotiomycetes</taxon>
        <taxon>Eurotiomycetidae</taxon>
        <taxon>Eurotiales</taxon>
        <taxon>Aspergillaceae</taxon>
        <taxon>Aspergillus</taxon>
        <taxon>Aspergillus subgen. Fumigati</taxon>
    </lineage>
</organism>
<name>PRP5_ASPCL</name>
<gene>
    <name type="primary">prp5</name>
    <name type="ORF">ACLA_025470</name>
</gene>
<evidence type="ECO:0000250" key="1"/>
<evidence type="ECO:0000255" key="2">
    <source>
        <dbReference type="PROSITE-ProRule" id="PRU00541"/>
    </source>
</evidence>
<evidence type="ECO:0000255" key="3">
    <source>
        <dbReference type="PROSITE-ProRule" id="PRU00542"/>
    </source>
</evidence>
<evidence type="ECO:0000256" key="4">
    <source>
        <dbReference type="SAM" id="MobiDB-lite"/>
    </source>
</evidence>
<evidence type="ECO:0000305" key="5"/>
<dbReference type="EC" id="3.6.4.13"/>
<dbReference type="EMBL" id="DS027059">
    <property type="protein sequence ID" value="EAW07830.1"/>
    <property type="molecule type" value="Genomic_DNA"/>
</dbReference>
<dbReference type="RefSeq" id="XP_001269256.1">
    <property type="nucleotide sequence ID" value="XM_001269255.1"/>
</dbReference>
<dbReference type="SMR" id="A1CQA9"/>
<dbReference type="STRING" id="344612.A1CQA9"/>
<dbReference type="EnsemblFungi" id="EAW07830">
    <property type="protein sequence ID" value="EAW07830"/>
    <property type="gene ID" value="ACLA_025470"/>
</dbReference>
<dbReference type="GeneID" id="4701879"/>
<dbReference type="KEGG" id="act:ACLA_025470"/>
<dbReference type="VEuPathDB" id="FungiDB:ACLA_025470"/>
<dbReference type="eggNOG" id="KOG0334">
    <property type="taxonomic scope" value="Eukaryota"/>
</dbReference>
<dbReference type="HOGENOM" id="CLU_003041_0_3_1"/>
<dbReference type="OMA" id="QLPMKKW"/>
<dbReference type="OrthoDB" id="196131at2759"/>
<dbReference type="Proteomes" id="UP000006701">
    <property type="component" value="Unassembled WGS sequence"/>
</dbReference>
<dbReference type="GO" id="GO:0005634">
    <property type="term" value="C:nucleus"/>
    <property type="evidence" value="ECO:0007669"/>
    <property type="project" value="UniProtKB-SubCell"/>
</dbReference>
<dbReference type="GO" id="GO:0005524">
    <property type="term" value="F:ATP binding"/>
    <property type="evidence" value="ECO:0007669"/>
    <property type="project" value="UniProtKB-KW"/>
</dbReference>
<dbReference type="GO" id="GO:0016887">
    <property type="term" value="F:ATP hydrolysis activity"/>
    <property type="evidence" value="ECO:0007669"/>
    <property type="project" value="RHEA"/>
</dbReference>
<dbReference type="GO" id="GO:0003676">
    <property type="term" value="F:nucleic acid binding"/>
    <property type="evidence" value="ECO:0007669"/>
    <property type="project" value="InterPro"/>
</dbReference>
<dbReference type="GO" id="GO:0003724">
    <property type="term" value="F:RNA helicase activity"/>
    <property type="evidence" value="ECO:0007669"/>
    <property type="project" value="UniProtKB-EC"/>
</dbReference>
<dbReference type="GO" id="GO:0006397">
    <property type="term" value="P:mRNA processing"/>
    <property type="evidence" value="ECO:0007669"/>
    <property type="project" value="UniProtKB-KW"/>
</dbReference>
<dbReference type="GO" id="GO:0008380">
    <property type="term" value="P:RNA splicing"/>
    <property type="evidence" value="ECO:0007669"/>
    <property type="project" value="UniProtKB-KW"/>
</dbReference>
<dbReference type="CDD" id="cd17953">
    <property type="entry name" value="DEADc_DDX46"/>
    <property type="match status" value="1"/>
</dbReference>
<dbReference type="CDD" id="cd18787">
    <property type="entry name" value="SF2_C_DEAD"/>
    <property type="match status" value="1"/>
</dbReference>
<dbReference type="FunFam" id="3.40.50.300:FF:000079">
    <property type="entry name" value="probable ATP-dependent RNA helicase DDX17"/>
    <property type="match status" value="1"/>
</dbReference>
<dbReference type="Gene3D" id="3.40.50.300">
    <property type="entry name" value="P-loop containing nucleotide triphosphate hydrolases"/>
    <property type="match status" value="2"/>
</dbReference>
<dbReference type="InterPro" id="IPR011545">
    <property type="entry name" value="DEAD/DEAH_box_helicase_dom"/>
</dbReference>
<dbReference type="InterPro" id="IPR014001">
    <property type="entry name" value="Helicase_ATP-bd"/>
</dbReference>
<dbReference type="InterPro" id="IPR001650">
    <property type="entry name" value="Helicase_C-like"/>
</dbReference>
<dbReference type="InterPro" id="IPR027417">
    <property type="entry name" value="P-loop_NTPase"/>
</dbReference>
<dbReference type="InterPro" id="IPR056149">
    <property type="entry name" value="PRP5/DDX46/KHDC4_KH"/>
</dbReference>
<dbReference type="InterPro" id="IPR000629">
    <property type="entry name" value="RNA-helicase_DEAD-box_CS"/>
</dbReference>
<dbReference type="InterPro" id="IPR014014">
    <property type="entry name" value="RNA_helicase_DEAD_Q_motif"/>
</dbReference>
<dbReference type="PANTHER" id="PTHR47958">
    <property type="entry name" value="ATP-DEPENDENT RNA HELICASE DBP3"/>
    <property type="match status" value="1"/>
</dbReference>
<dbReference type="Pfam" id="PF00270">
    <property type="entry name" value="DEAD"/>
    <property type="match status" value="1"/>
</dbReference>
<dbReference type="Pfam" id="PF00271">
    <property type="entry name" value="Helicase_C"/>
    <property type="match status" value="1"/>
</dbReference>
<dbReference type="Pfam" id="PF23469">
    <property type="entry name" value="KH_12"/>
    <property type="match status" value="1"/>
</dbReference>
<dbReference type="SMART" id="SM00487">
    <property type="entry name" value="DEXDc"/>
    <property type="match status" value="1"/>
</dbReference>
<dbReference type="SMART" id="SM00490">
    <property type="entry name" value="HELICc"/>
    <property type="match status" value="1"/>
</dbReference>
<dbReference type="SUPFAM" id="SSF52540">
    <property type="entry name" value="P-loop containing nucleoside triphosphate hydrolases"/>
    <property type="match status" value="1"/>
</dbReference>
<dbReference type="PROSITE" id="PS00039">
    <property type="entry name" value="DEAD_ATP_HELICASE"/>
    <property type="match status" value="1"/>
</dbReference>
<dbReference type="PROSITE" id="PS51192">
    <property type="entry name" value="HELICASE_ATP_BIND_1"/>
    <property type="match status" value="1"/>
</dbReference>
<dbReference type="PROSITE" id="PS51194">
    <property type="entry name" value="HELICASE_CTER"/>
    <property type="match status" value="1"/>
</dbReference>
<dbReference type="PROSITE" id="PS51195">
    <property type="entry name" value="Q_MOTIF"/>
    <property type="match status" value="1"/>
</dbReference>
<comment type="function">
    <text evidence="1">ATP-dependent RNA helicase involved spliceosome assembly and in nuclear splicing. Catalyzes an ATP-dependent conformational change of U2 snRNP. Bridges U1 and U2 snRNPs and enables stable U2 snRNP association with intron RNA (By similarity).</text>
</comment>
<comment type="catalytic activity">
    <reaction>
        <text>ATP + H2O = ADP + phosphate + H(+)</text>
        <dbReference type="Rhea" id="RHEA:13065"/>
        <dbReference type="ChEBI" id="CHEBI:15377"/>
        <dbReference type="ChEBI" id="CHEBI:15378"/>
        <dbReference type="ChEBI" id="CHEBI:30616"/>
        <dbReference type="ChEBI" id="CHEBI:43474"/>
        <dbReference type="ChEBI" id="CHEBI:456216"/>
        <dbReference type="EC" id="3.6.4.13"/>
    </reaction>
</comment>
<comment type="subcellular location">
    <subcellularLocation>
        <location evidence="1">Nucleus</location>
    </subcellularLocation>
</comment>
<comment type="domain">
    <text>The Q motif is unique to and characteristic of the DEAD box family of RNA helicases and controls ATP binding and hydrolysis.</text>
</comment>
<comment type="similarity">
    <text evidence="5">Belongs to the DEAD box helicase family. DDX46/PRP5 subfamily.</text>
</comment>
<sequence>MARHGDTRSPSPVGSTYSSSRRSRRDDDRYEKSRREDGRGHRRSRSPERRYRDRDRDRESYRRRDRSLDRRDDYRNDGGYRSNRRDRSRDRRRSRDRGDDRDHRRRSRDRDYRSRRDDSRDKARRRTDDSADLKHKSRRDDSRTRDLDSKSRDTSKPSTPAPAAQTEDEKRAERLAKLEAWKQKQAAEKERKQREAAAAGGARSILEEIDRKSGLSPAVGSPKSPVTPTTDATPAPYAGKFDPKAIKRNAAPTPSAPLVLGNDVAVPQIAKASATFSSMNNHAQANKPAAALSTAPSTLKSKRNVGGFGLGAKQVADAEKPSAVKTLGFGEEESTRKKLERLPTPPLEDGKDETVAADMGAEDEDDDMQDGETEEENAAAARAAAERREERLQNEALRAQSSEKVPQTNGDVEMNDAPIQAEAENMEVDVEEEDVDPLDAFMSELAESAPPKKTFGTKFSKAKEQQPEAMFGDENDVDLTAVGEGDADDFLAIANKAKKKKDIPTVNHEKVEYEPFRKKFYTEPSNLAQMTDEEAASLRLELDGIKVRGVDVPKPVQKWSQCGLGVQALDVIERLGYESPTSIQSQAIPAIMSGRDVIGVAKTGSGKTVAFLIPMFRHIKDQRPLDNMEGPIGLIMTPTRELATQIHKDCKPFLKALNLRAVCAYGGAPIKDQIADLKRGAEIVVCTPGRMIDLLAANAGRVTNLRRVTYVVLDEADRMFDMGFEPQVMKIMANIRPDRQTVLFSATFPRNMEALARKALTKPIEIIVGGRSVVAPEITQIVEVRNEDTKFVRLLEILGNLYSDDANEDARSLIFVERQEAADALLRELMRKGYPCMSIHGGKDQIDRDSTIEDFKAGIFPVLIATSVAARGLDVKQLKLVVNYDAPNHLEDYVHRAGRTGRAGNTGTAVTFLTEEQERYSVDIAKALKQSGQQVPEPVQKMVDSFLEKVKAGKEKASASGFGGKGLERLDQERDAARNRERRTYKTGEEGEDEEEKEDKAEKADERFNKALSSVQSAAAAAPTLPGVPKGIDLDGKITVHRTEKDPAGTSKNPLDKVGSAVADIHARLSRAGVMRSGVPIDNRGPDAGAYHATLEINDFPQKARWAVTNRTNVAKILEATGTSITTKGSFYPPGKVPGPNENAKLYILVEGETELAVTNAMRELMRLLKEGTIAAADSDARAPVGGRYNVV</sequence>